<accession>Q9NZU7</accession>
<accession>O95663</accession>
<accession>Q8N6H5</accession>
<accession>Q9NZU8</accession>
<name>CABP1_HUMAN</name>
<feature type="initiator methionine" description="Removed" evidence="3">
    <location>
        <position position="1"/>
    </location>
</feature>
<feature type="chain" id="PRO_0000073513" description="Calcium-binding protein 1">
    <location>
        <begin position="2"/>
        <end position="370"/>
    </location>
</feature>
<feature type="domain" description="EF-hand 1" evidence="4">
    <location>
        <begin position="225"/>
        <end position="260"/>
    </location>
</feature>
<feature type="domain" description="EF-hand 2" evidence="4">
    <location>
        <begin position="279"/>
        <end position="296"/>
    </location>
</feature>
<feature type="domain" description="EF-hand 3" evidence="4">
    <location>
        <begin position="302"/>
        <end position="337"/>
    </location>
</feature>
<feature type="domain" description="EF-hand 4" evidence="4">
    <location>
        <begin position="339"/>
        <end position="370"/>
    </location>
</feature>
<feature type="region of interest" description="Disordered" evidence="6">
    <location>
        <begin position="1"/>
        <end position="198"/>
    </location>
</feature>
<feature type="compositionally biased region" description="Low complexity" evidence="6">
    <location>
        <begin position="50"/>
        <end position="61"/>
    </location>
</feature>
<feature type="compositionally biased region" description="Low complexity" evidence="6">
    <location>
        <begin position="68"/>
        <end position="84"/>
    </location>
</feature>
<feature type="compositionally biased region" description="Low complexity" evidence="6">
    <location>
        <begin position="148"/>
        <end position="157"/>
    </location>
</feature>
<feature type="binding site" evidence="5">
    <location>
        <position position="238"/>
    </location>
    <ligand>
        <name>Ca(2+)</name>
        <dbReference type="ChEBI" id="CHEBI:29108"/>
        <label>1</label>
    </ligand>
</feature>
<feature type="binding site" evidence="16">
    <location>
        <position position="238"/>
    </location>
    <ligand>
        <name>Mg(2+)</name>
        <dbReference type="ChEBI" id="CHEBI:18420"/>
    </ligand>
</feature>
<feature type="binding site" evidence="5">
    <location>
        <position position="240"/>
    </location>
    <ligand>
        <name>Ca(2+)</name>
        <dbReference type="ChEBI" id="CHEBI:29108"/>
        <label>1</label>
    </ligand>
</feature>
<feature type="binding site" evidence="16">
    <location>
        <position position="240"/>
    </location>
    <ligand>
        <name>Mg(2+)</name>
        <dbReference type="ChEBI" id="CHEBI:18420"/>
    </ligand>
</feature>
<feature type="binding site" evidence="5">
    <location>
        <position position="242"/>
    </location>
    <ligand>
        <name>Ca(2+)</name>
        <dbReference type="ChEBI" id="CHEBI:29108"/>
        <label>1</label>
    </ligand>
</feature>
<feature type="binding site" evidence="16">
    <location>
        <position position="242"/>
    </location>
    <ligand>
        <name>Mg(2+)</name>
        <dbReference type="ChEBI" id="CHEBI:18420"/>
    </ligand>
</feature>
<feature type="binding site" evidence="5">
    <location>
        <position position="244"/>
    </location>
    <ligand>
        <name>Ca(2+)</name>
        <dbReference type="ChEBI" id="CHEBI:29108"/>
        <label>1</label>
    </ligand>
</feature>
<feature type="binding site" evidence="16">
    <location>
        <position position="244"/>
    </location>
    <ligand>
        <name>Mg(2+)</name>
        <dbReference type="ChEBI" id="CHEBI:18420"/>
    </ligand>
</feature>
<feature type="binding site" evidence="5">
    <location>
        <position position="249"/>
    </location>
    <ligand>
        <name>Ca(2+)</name>
        <dbReference type="ChEBI" id="CHEBI:29108"/>
        <label>1</label>
    </ligand>
</feature>
<feature type="binding site" evidence="5 16">
    <location>
        <position position="315"/>
    </location>
    <ligand>
        <name>Ca(2+)</name>
        <dbReference type="ChEBI" id="CHEBI:29108"/>
        <label>2</label>
    </ligand>
</feature>
<feature type="binding site" evidence="5 16">
    <location>
        <position position="317"/>
    </location>
    <ligand>
        <name>Ca(2+)</name>
        <dbReference type="ChEBI" id="CHEBI:29108"/>
        <label>2</label>
    </ligand>
</feature>
<feature type="binding site" evidence="5 16">
    <location>
        <position position="319"/>
    </location>
    <ligand>
        <name>Ca(2+)</name>
        <dbReference type="ChEBI" id="CHEBI:29108"/>
        <label>2</label>
    </ligand>
</feature>
<feature type="binding site" evidence="5 16">
    <location>
        <position position="321"/>
    </location>
    <ligand>
        <name>Ca(2+)</name>
        <dbReference type="ChEBI" id="CHEBI:29108"/>
        <label>2</label>
    </ligand>
</feature>
<feature type="binding site" evidence="5 16">
    <location>
        <position position="326"/>
    </location>
    <ligand>
        <name>Ca(2+)</name>
        <dbReference type="ChEBI" id="CHEBI:29108"/>
        <label>2</label>
    </ligand>
</feature>
<feature type="binding site" evidence="5 16">
    <location>
        <position position="352"/>
    </location>
    <ligand>
        <name>Ca(2+)</name>
        <dbReference type="ChEBI" id="CHEBI:29108"/>
        <label>3</label>
    </ligand>
</feature>
<feature type="binding site" evidence="16">
    <location>
        <position position="353"/>
    </location>
    <ligand>
        <name>Ca(2+)</name>
        <dbReference type="ChEBI" id="CHEBI:29108"/>
        <label>2</label>
    </ligand>
</feature>
<feature type="binding site" evidence="5 16">
    <location>
        <position position="354"/>
    </location>
    <ligand>
        <name>Ca(2+)</name>
        <dbReference type="ChEBI" id="CHEBI:29108"/>
        <label>3</label>
    </ligand>
</feature>
<feature type="binding site" evidence="5 16">
    <location>
        <position position="356"/>
    </location>
    <ligand>
        <name>Ca(2+)</name>
        <dbReference type="ChEBI" id="CHEBI:29108"/>
        <label>3</label>
    </ligand>
</feature>
<feature type="binding site" evidence="16">
    <location>
        <position position="357"/>
    </location>
    <ligand>
        <name>Ca(2+)</name>
        <dbReference type="ChEBI" id="CHEBI:29108"/>
        <label>2</label>
    </ligand>
</feature>
<feature type="binding site" evidence="5 16">
    <location>
        <position position="358"/>
    </location>
    <ligand>
        <name>Ca(2+)</name>
        <dbReference type="ChEBI" id="CHEBI:29108"/>
        <label>3</label>
    </ligand>
</feature>
<feature type="binding site" evidence="16">
    <location>
        <position position="360"/>
    </location>
    <ligand>
        <name>Ca(2+)</name>
        <dbReference type="ChEBI" id="CHEBI:29108"/>
        <label>2</label>
    </ligand>
</feature>
<feature type="binding site" evidence="5 16">
    <location>
        <position position="363"/>
    </location>
    <ligand>
        <name>Ca(2+)</name>
        <dbReference type="ChEBI" id="CHEBI:29108"/>
        <label>3</label>
    </ligand>
</feature>
<feature type="modified residue" description="Phosphoserine" evidence="11">
    <location>
        <position position="323"/>
    </location>
</feature>
<feature type="lipid moiety-binding region" description="N-myristoyl glycine" evidence="3">
    <location>
        <position position="2"/>
    </location>
</feature>
<feature type="splice variant" id="VSP_037936" description="In isoform Calbrain." evidence="18">
    <location>
        <begin position="1"/>
        <end position="300"/>
    </location>
</feature>
<feature type="splice variant" id="VSP_037937" description="In isoform S-CaBP1." evidence="17">
    <location>
        <begin position="1"/>
        <end position="203"/>
    </location>
</feature>
<feature type="splice variant" id="VSP_037938" description="In isoform L-CaBP1." evidence="17">
    <location>
        <begin position="1"/>
        <end position="143"/>
    </location>
</feature>
<feature type="splice variant" id="VSP_037939" description="In isoform L-CaBP1." evidence="17">
    <original>RPREALPAAASRPSPSSPLPPARGRDGEERGLSPALGLRGSLRARGRGDSVPAAASEADPFLHRLRPMLSSAFGQ</original>
    <variation>MGNCVKYPLRNLSRKMCQEEQTSYMVVQTSEEGLAADAELPGPLLMLAQNCAVMHNLLGPACIFLRKGFAENRQP</variation>
    <location>
        <begin position="144"/>
        <end position="218"/>
    </location>
</feature>
<feature type="splice variant" id="VSP_037940" description="In isoform S-CaBP1." evidence="17">
    <original>FLHRLRPMLSSAFGQ</original>
    <variation>MGNCVKYPLRNLSRK</variation>
    <location>
        <begin position="204"/>
        <end position="218"/>
    </location>
</feature>
<feature type="mutagenesis site" description="Loss of magnesium-binding. Loss of binding to ITPRs; when associated with A-240; A-315; A-317; A-352 and A-354." evidence="9 16">
    <original>D</original>
    <variation>A</variation>
    <location>
        <position position="238"/>
    </location>
</feature>
<feature type="mutagenesis site" description="Loss of magnesium-binding. Loss of binding to ITPRs; when associated with A-238; A-315; A-317; A-352 and A-354." evidence="9 16">
    <original>D</original>
    <variation>A</variation>
    <location>
        <position position="240"/>
    </location>
</feature>
<feature type="mutagenesis site" description="Loss of magnesium-binding." evidence="16">
    <original>D</original>
    <variation>A</variation>
    <location>
        <position position="242"/>
    </location>
</feature>
<feature type="mutagenesis site" description="No effect on magnesium-binding." evidence="16">
    <original>D</original>
    <variation>A</variation>
    <location>
        <position position="249"/>
    </location>
</feature>
<feature type="mutagenesis site" description="Loss of binding to ITPRs; when associated with A-238; A-240; A-317; A-352 and A-354." evidence="9">
    <original>D</original>
    <variation>A</variation>
    <location>
        <position position="315"/>
    </location>
</feature>
<feature type="mutagenesis site" description="Loss of binding to ITPRs; when associated with A-238; A-240; A-315; A-352 and A-354." evidence="9">
    <original>N</original>
    <variation>A</variation>
    <location>
        <position position="317"/>
    </location>
</feature>
<feature type="mutagenesis site" description="Loss of phosphorylation and loss of calcium release by InsP(3)." evidence="11">
    <original>S</original>
    <variation>A</variation>
    <location>
        <position position="323"/>
    </location>
</feature>
<feature type="mutagenesis site" description="Loss of binding to ITPRs; when associated with A-238; A-240; A-315; A-317 and A-354." evidence="9">
    <original>D</original>
    <variation>A</variation>
    <location>
        <position position="352"/>
    </location>
</feature>
<feature type="mutagenesis site" description="Loss of binding to ITPRs; when associated with A-238; A-240; A-315; A-317 and A-352." evidence="9">
    <original>N</original>
    <variation>A</variation>
    <location>
        <position position="354"/>
    </location>
</feature>
<feature type="sequence conflict" description="In Ref. 4; AAH30201." evidence="19" ref="4">
    <original>Q</original>
    <variation>R</variation>
    <location>
        <position position="140"/>
    </location>
</feature>
<feature type="helix" evidence="23">
    <location>
        <begin position="224"/>
        <end position="240"/>
    </location>
</feature>
<feature type="strand" evidence="23">
    <location>
        <begin position="242"/>
        <end position="244"/>
    </location>
</feature>
<feature type="helix" evidence="23">
    <location>
        <begin position="247"/>
        <end position="256"/>
    </location>
</feature>
<feature type="helix" evidence="23">
    <location>
        <begin position="263"/>
        <end position="274"/>
    </location>
</feature>
<feature type="strand" evidence="21">
    <location>
        <begin position="277"/>
        <end position="279"/>
    </location>
</feature>
<feature type="helix" evidence="23">
    <location>
        <begin position="283"/>
        <end position="294"/>
    </location>
</feature>
<feature type="helix" evidence="23">
    <location>
        <begin position="299"/>
        <end position="302"/>
    </location>
</feature>
<feature type="helix" evidence="23">
    <location>
        <begin position="304"/>
        <end position="314"/>
    </location>
</feature>
<feature type="strand" evidence="23">
    <location>
        <begin position="319"/>
        <end position="322"/>
    </location>
</feature>
<feature type="helix" evidence="23">
    <location>
        <begin position="324"/>
        <end position="335"/>
    </location>
</feature>
<feature type="strand" evidence="22">
    <location>
        <begin position="337"/>
        <end position="339"/>
    </location>
</feature>
<feature type="helix" evidence="23">
    <location>
        <begin position="341"/>
        <end position="351"/>
    </location>
</feature>
<feature type="strand" evidence="23">
    <location>
        <begin position="353"/>
        <end position="359"/>
    </location>
</feature>
<feature type="helix" evidence="23">
    <location>
        <begin position="361"/>
        <end position="367"/>
    </location>
</feature>
<feature type="initiator methionine" description="Removed" evidence="19">
    <location sequence="Q9NZU7-1">
        <position position="1"/>
    </location>
</feature>
<feature type="lipid moiety-binding region" description="N-myristoyl glycine" evidence="7">
    <location sequence="Q9NZU7-1">
        <position position="2"/>
    </location>
</feature>
<feature type="lipid moiety-binding region" description="S-palmitoyl cysteine" evidence="7">
    <location sequence="Q9NZU7-1">
        <position position="4"/>
    </location>
</feature>
<feature type="initiator methionine" description="Removed" evidence="19">
    <location sequence="Q9NZU7-2">
        <position position="1"/>
    </location>
</feature>
<feature type="lipid moiety-binding region" description="N-myristoyl glycine" evidence="7">
    <location sequence="Q9NZU7-2">
        <position position="2"/>
    </location>
</feature>
<feature type="lipid moiety-binding region" description="S-palmitoyl cysteine" evidence="7">
    <location sequence="Q9NZU7-2">
        <position position="4"/>
    </location>
</feature>
<reference key="1">
    <citation type="journal article" date="1999" name="J. Biol. Chem.">
        <title>Calbrain, a novel two EF-hand calcium-binding protein that suppresses Ca2+/calmodulin-dependent protein kinase II activity in the brain.</title>
        <authorList>
            <person name="Yamaguchi K."/>
            <person name="Yamaguchi F."/>
            <person name="Miyamoto O."/>
            <person name="Sugimoto K."/>
            <person name="Konishi R."/>
            <person name="Hatase O."/>
        </authorList>
    </citation>
    <scope>NUCLEOTIDE SEQUENCE [MRNA] (ISOFORM CALBRAIN)</scope>
    <source>
        <tissue>Cerebellum</tissue>
    </source>
</reference>
<reference key="2">
    <citation type="journal article" date="2000" name="J. Biol. Chem.">
        <title>Five members of a novel Ca(2+)-binding protein (CABP) subfamily with similarity to calmodulin.</title>
        <authorList>
            <person name="Haeseleer F."/>
            <person name="Sokal I."/>
            <person name="Verlinde C.L.M.J."/>
            <person name="Erdjument-Bromage H."/>
            <person name="Tempst P."/>
            <person name="Pronin A.N."/>
            <person name="Benovic J.L."/>
            <person name="Fariss R.N."/>
            <person name="Palczewski K."/>
        </authorList>
    </citation>
    <scope>NUCLEOTIDE SEQUENCE [MRNA] (ISOFORMS L-CABP1 AND S-CABP1)</scope>
    <scope>MYRISTOYLATION AT GLY-2 (ISOFORMS L-CABP1 AND S-CABP1)</scope>
    <scope>PALMITOYLATION AT CYS-4 (ISOFORMS L-CABP1 AND S-CABP1)</scope>
    <scope>SUBCELLULAR LOCATION</scope>
    <source>
        <tissue>Retina</tissue>
    </source>
</reference>
<reference key="3">
    <citation type="journal article" date="2006" name="Nature">
        <title>The finished DNA sequence of human chromosome 12.</title>
        <authorList>
            <person name="Scherer S.E."/>
            <person name="Muzny D.M."/>
            <person name="Buhay C.J."/>
            <person name="Chen R."/>
            <person name="Cree A."/>
            <person name="Ding Y."/>
            <person name="Dugan-Rocha S."/>
            <person name="Gill R."/>
            <person name="Gunaratne P."/>
            <person name="Harris R.A."/>
            <person name="Hawes A.C."/>
            <person name="Hernandez J."/>
            <person name="Hodgson A.V."/>
            <person name="Hume J."/>
            <person name="Jackson A."/>
            <person name="Khan Z.M."/>
            <person name="Kovar-Smith C."/>
            <person name="Lewis L.R."/>
            <person name="Lozado R.J."/>
            <person name="Metzker M.L."/>
            <person name="Milosavljevic A."/>
            <person name="Miner G.R."/>
            <person name="Montgomery K.T."/>
            <person name="Morgan M.B."/>
            <person name="Nazareth L.V."/>
            <person name="Scott G."/>
            <person name="Sodergren E."/>
            <person name="Song X.-Z."/>
            <person name="Steffen D."/>
            <person name="Lovering R.C."/>
            <person name="Wheeler D.A."/>
            <person name="Worley K.C."/>
            <person name="Yuan Y."/>
            <person name="Zhang Z."/>
            <person name="Adams C.Q."/>
            <person name="Ansari-Lari M.A."/>
            <person name="Ayele M."/>
            <person name="Brown M.J."/>
            <person name="Chen G."/>
            <person name="Chen Z."/>
            <person name="Clerc-Blankenburg K.P."/>
            <person name="Davis C."/>
            <person name="Delgado O."/>
            <person name="Dinh H.H."/>
            <person name="Draper H."/>
            <person name="Gonzalez-Garay M.L."/>
            <person name="Havlak P."/>
            <person name="Jackson L.R."/>
            <person name="Jacob L.S."/>
            <person name="Kelly S.H."/>
            <person name="Li L."/>
            <person name="Li Z."/>
            <person name="Liu J."/>
            <person name="Liu W."/>
            <person name="Lu J."/>
            <person name="Maheshwari M."/>
            <person name="Nguyen B.-V."/>
            <person name="Okwuonu G.O."/>
            <person name="Pasternak S."/>
            <person name="Perez L.M."/>
            <person name="Plopper F.J.H."/>
            <person name="Santibanez J."/>
            <person name="Shen H."/>
            <person name="Tabor P.E."/>
            <person name="Verduzco D."/>
            <person name="Waldron L."/>
            <person name="Wang Q."/>
            <person name="Williams G.A."/>
            <person name="Zhang J."/>
            <person name="Zhou J."/>
            <person name="Allen C.C."/>
            <person name="Amin A.G."/>
            <person name="Anyalebechi V."/>
            <person name="Bailey M."/>
            <person name="Barbaria J.A."/>
            <person name="Bimage K.E."/>
            <person name="Bryant N.P."/>
            <person name="Burch P.E."/>
            <person name="Burkett C.E."/>
            <person name="Burrell K.L."/>
            <person name="Calderon E."/>
            <person name="Cardenas V."/>
            <person name="Carter K."/>
            <person name="Casias K."/>
            <person name="Cavazos I."/>
            <person name="Cavazos S.R."/>
            <person name="Ceasar H."/>
            <person name="Chacko J."/>
            <person name="Chan S.N."/>
            <person name="Chavez D."/>
            <person name="Christopoulos C."/>
            <person name="Chu J."/>
            <person name="Cockrell R."/>
            <person name="Cox C.D."/>
            <person name="Dang M."/>
            <person name="Dathorne S.R."/>
            <person name="David R."/>
            <person name="Davis C.M."/>
            <person name="Davy-Carroll L."/>
            <person name="Deshazo D.R."/>
            <person name="Donlin J.E."/>
            <person name="D'Souza L."/>
            <person name="Eaves K.A."/>
            <person name="Egan A."/>
            <person name="Emery-Cohen A.J."/>
            <person name="Escotto M."/>
            <person name="Flagg N."/>
            <person name="Forbes L.D."/>
            <person name="Gabisi A.M."/>
            <person name="Garza M."/>
            <person name="Hamilton C."/>
            <person name="Henderson N."/>
            <person name="Hernandez O."/>
            <person name="Hines S."/>
            <person name="Hogues M.E."/>
            <person name="Huang M."/>
            <person name="Idlebird D.G."/>
            <person name="Johnson R."/>
            <person name="Jolivet A."/>
            <person name="Jones S."/>
            <person name="Kagan R."/>
            <person name="King L.M."/>
            <person name="Leal B."/>
            <person name="Lebow H."/>
            <person name="Lee S."/>
            <person name="LeVan J.M."/>
            <person name="Lewis L.C."/>
            <person name="London P."/>
            <person name="Lorensuhewa L.M."/>
            <person name="Loulseged H."/>
            <person name="Lovett D.A."/>
            <person name="Lucier A."/>
            <person name="Lucier R.L."/>
            <person name="Ma J."/>
            <person name="Madu R.C."/>
            <person name="Mapua P."/>
            <person name="Martindale A.D."/>
            <person name="Martinez E."/>
            <person name="Massey E."/>
            <person name="Mawhiney S."/>
            <person name="Meador M.G."/>
            <person name="Mendez S."/>
            <person name="Mercado C."/>
            <person name="Mercado I.C."/>
            <person name="Merritt C.E."/>
            <person name="Miner Z.L."/>
            <person name="Minja E."/>
            <person name="Mitchell T."/>
            <person name="Mohabbat F."/>
            <person name="Mohabbat K."/>
            <person name="Montgomery B."/>
            <person name="Moore N."/>
            <person name="Morris S."/>
            <person name="Munidasa M."/>
            <person name="Ngo R.N."/>
            <person name="Nguyen N.B."/>
            <person name="Nickerson E."/>
            <person name="Nwaokelemeh O.O."/>
            <person name="Nwokenkwo S."/>
            <person name="Obregon M."/>
            <person name="Oguh M."/>
            <person name="Oragunye N."/>
            <person name="Oviedo R.J."/>
            <person name="Parish B.J."/>
            <person name="Parker D.N."/>
            <person name="Parrish J."/>
            <person name="Parks K.L."/>
            <person name="Paul H.A."/>
            <person name="Payton B.A."/>
            <person name="Perez A."/>
            <person name="Perrin W."/>
            <person name="Pickens A."/>
            <person name="Primus E.L."/>
            <person name="Pu L.-L."/>
            <person name="Puazo M."/>
            <person name="Quiles M.M."/>
            <person name="Quiroz J.B."/>
            <person name="Rabata D."/>
            <person name="Reeves K."/>
            <person name="Ruiz S.J."/>
            <person name="Shao H."/>
            <person name="Sisson I."/>
            <person name="Sonaike T."/>
            <person name="Sorelle R.P."/>
            <person name="Sutton A.E."/>
            <person name="Svatek A.F."/>
            <person name="Svetz L.A."/>
            <person name="Tamerisa K.S."/>
            <person name="Taylor T.R."/>
            <person name="Teague B."/>
            <person name="Thomas N."/>
            <person name="Thorn R.D."/>
            <person name="Trejos Z.Y."/>
            <person name="Trevino B.K."/>
            <person name="Ukegbu O.N."/>
            <person name="Urban J.B."/>
            <person name="Vasquez L.I."/>
            <person name="Vera V.A."/>
            <person name="Villasana D.M."/>
            <person name="Wang L."/>
            <person name="Ward-Moore S."/>
            <person name="Warren J.T."/>
            <person name="Wei X."/>
            <person name="White F."/>
            <person name="Williamson A.L."/>
            <person name="Wleczyk R."/>
            <person name="Wooden H.S."/>
            <person name="Wooden S.H."/>
            <person name="Yen J."/>
            <person name="Yoon L."/>
            <person name="Yoon V."/>
            <person name="Zorrilla S.E."/>
            <person name="Nelson D."/>
            <person name="Kucherlapati R."/>
            <person name="Weinstock G."/>
            <person name="Gibbs R.A."/>
        </authorList>
    </citation>
    <scope>NUCLEOTIDE SEQUENCE [LARGE SCALE GENOMIC DNA]</scope>
</reference>
<reference key="4">
    <citation type="journal article" date="2004" name="Genome Res.">
        <title>The status, quality, and expansion of the NIH full-length cDNA project: the Mammalian Gene Collection (MGC).</title>
        <authorList>
            <consortium name="The MGC Project Team"/>
        </authorList>
    </citation>
    <scope>NUCLEOTIDE SEQUENCE [LARGE SCALE MRNA] (ISOFORM CALDENDRIN)</scope>
</reference>
<reference key="5">
    <citation type="journal article" date="1998" name="J. Biol. Chem.">
        <title>Caldendrin, a novel neuronal calcium-binding protein confined to the somato-dendritic compartment.</title>
        <authorList>
            <person name="Seidenbecher C.I."/>
            <person name="Langnaese K."/>
            <person name="Sanmarti-Vila L."/>
            <person name="Boeckers T.M."/>
            <person name="Smalla K.-H."/>
            <person name="Sabel B.A."/>
            <person name="Garner C.C."/>
            <person name="Gundelfinger E.D."/>
            <person name="Kreutz M.R."/>
        </authorList>
    </citation>
    <scope>ALTERNATIVE SPLICING (ISOFORM CALDENDRIN)</scope>
</reference>
<reference key="6">
    <citation type="journal article" date="2002" name="Proc. Natl. Acad. Sci. U.S.A.">
        <title>Identification of a family of calcium sensors as protein ligands of inositol trisphosphate receptor Ca(2+) release channels.</title>
        <authorList>
            <person name="Yang J."/>
            <person name="McBride S."/>
            <person name="Mak D.-O.D."/>
            <person name="Vardi N."/>
            <person name="Palczewski K."/>
            <person name="Haeseleer F."/>
            <person name="Foskett J.K."/>
        </authorList>
    </citation>
    <scope>INTERACTION WITH ITPR1; ITPR2 AND ITPR3</scope>
    <scope>MUTAGENESIS OF ASP-238; ASP-240; ASP-315; ASN-317; ASP-352 AND ASN-354</scope>
</reference>
<reference key="7">
    <citation type="journal article" date="2002" name="Nat. Neurosci.">
        <title>Differential modulation of Ca(v)2.1 channels by calmodulin and Ca2+-binding protein 1.</title>
        <authorList>
            <person name="Lee A."/>
            <person name="Westenbroek R.E."/>
            <person name="Haeseleer F."/>
            <person name="Palczewski K."/>
            <person name="Scheuer T."/>
            <person name="Catterall W.A."/>
        </authorList>
    </citation>
    <scope>FUNCTION</scope>
    <scope>INTERACTION WITH CACNA1A</scope>
</reference>
<reference key="8">
    <citation type="journal article" date="2004" name="EMBO J.">
        <title>Regulation of InsP3 receptor activity by neuronal Ca2+-binding proteins.</title>
        <authorList>
            <person name="Kasri N.N."/>
            <person name="Holmes A.M."/>
            <person name="Bultynck G."/>
            <person name="Parys J.B."/>
            <person name="Bootman M.D."/>
            <person name="Rietdorf K."/>
            <person name="Missiaen L."/>
            <person name="McDonald F."/>
            <person name="De Smedt H."/>
            <person name="Conway S.J."/>
            <person name="Holmes A.B."/>
            <person name="Berridge M.J."/>
            <person name="Roderick H.L."/>
        </authorList>
    </citation>
    <scope>PHOSPHORYLATION AT SER-323</scope>
    <scope>MUTAGENESIS OF SER-323</scope>
    <scope>SUBCELLULAR LOCATION</scope>
    <scope>INTERACTION WITH ITPR1</scope>
</reference>
<reference key="9">
    <citation type="journal article" date="2004" name="J. Biol. Chem.">
        <title>Calcium-binding protein 1 is an inhibitor of agonist-evoked, inositol 1,4,5-trisphosphate-mediated calcium signaling.</title>
        <authorList>
            <person name="Haynes L.P."/>
            <person name="Tepikin A.V."/>
            <person name="Burgoyne R.D."/>
        </authorList>
    </citation>
    <scope>FUNCTION</scope>
    <scope>SUBCELLULAR LOCATION</scope>
</reference>
<reference key="10">
    <citation type="journal article" date="2004" name="J. Mol. Biol.">
        <title>Caldendrin but not calmodulin binds to light chain 3 of MAP1A/B: an association with the microtubule cytoskeleton highlighting exclusive binding partners for neuronal Ca(2+)-sensor proteins.</title>
        <authorList>
            <person name="Seidenbecher C.I."/>
            <person name="Landwehr M."/>
            <person name="Smalla K.H."/>
            <person name="Kreutz M."/>
            <person name="Dieterich D.C."/>
            <person name="Zuschratter W."/>
            <person name="Reissner C."/>
            <person name="Hammarback J.A."/>
            <person name="Bockers T.M."/>
            <person name="Gundelfinger E.D."/>
            <person name="Kreutz M.R."/>
        </authorList>
    </citation>
    <scope>INTERACTION WITH MAP1LC3B</scope>
</reference>
<reference key="11">
    <citation type="journal article" date="2004" name="J. Neurosci.">
        <title>Ca2+-binding protein-1 facilitates and forms a postsynaptic complex with Cav1.2 (L-type) Ca2+ channels.</title>
        <authorList>
            <person name="Zhou H."/>
            <person name="Kim S.-A."/>
            <person name="Kirk E.A."/>
            <person name="Tippens A.L."/>
            <person name="Sun H."/>
            <person name="Haeseleer F."/>
            <person name="Lee A."/>
        </authorList>
    </citation>
    <scope>FUNCTION</scope>
    <scope>INTERACTION WITH CACNA1C</scope>
</reference>
<reference key="12">
    <citation type="journal article" date="2005" name="J. Biol. Chem.">
        <title>Molecular mechanism for divergent regulation of Cav1.2 Ca2+ channels by calmodulin and Ca2+-binding protein-1.</title>
        <authorList>
            <person name="Zhou H."/>
            <person name="Yu K."/>
            <person name="McCoy K.L."/>
            <person name="Lee A."/>
        </authorList>
    </citation>
    <scope>FUNCTION</scope>
    <scope>INTERACTION WITH CACNA1C</scope>
</reference>
<reference key="13">
    <citation type="journal article" date="2005" name="Pflugers Arch.">
        <title>Inhibition of TRPC5 channels by Ca2+-binding protein 1 in Xenopus oocytes.</title>
        <authorList>
            <person name="Kinoshita-Kawada M."/>
            <person name="Tang J."/>
            <person name="Xiao R."/>
            <person name="Kaneko S."/>
            <person name="Foskett J.K."/>
            <person name="Zhu M.X."/>
        </authorList>
    </citation>
    <scope>FUNCTION</scope>
    <scope>INTERACTION WITH TRPC5</scope>
</reference>
<reference key="14">
    <citation type="journal article" date="2005" name="J. Biol. Chem.">
        <title>Structural analysis of Mg2+ and Ca2+ binding to CaBP1, a neuron-specific regulator of calcium channels.</title>
        <authorList>
            <person name="Wingard J.N."/>
            <person name="Chan J."/>
            <person name="Bosanac I."/>
            <person name="Haeseleer F."/>
            <person name="Palczewski K."/>
            <person name="Ikura M."/>
            <person name="Ames J.B."/>
        </authorList>
    </citation>
    <scope>SUBUNIT</scope>
    <scope>CALCIUM-BINDING</scope>
    <scope>MAGNESIUM-BINDING</scope>
</reference>
<reference key="15">
    <citation type="journal article" date="2009" name="J. Biol. Chem.">
        <title>Structural insights into Ca2+-dependent regulation of inositol 1,4,5-trisphosphate receptors by CaBP1.</title>
        <authorList>
            <person name="Li C."/>
            <person name="Chan J."/>
            <person name="Haeseleer F."/>
            <person name="Mikoshiba K."/>
            <person name="Palczewski K."/>
            <person name="Ikura M."/>
            <person name="Ames J.B."/>
        </authorList>
    </citation>
    <scope>STRUCTURE BY NMR OF 219-294 AND 299-370 IN COMPLEX WITH MAGNESIUM AND CALCIUM</scope>
    <scope>MUTAGENESIS OF ASP-238; ASP-240; ASP-242 AND ASP-249</scope>
</reference>
<sequence>MGGGDGAAFKRPGDGARLQRVLGLGSRREPRSLPAGGPAPRRTAPPPPGHASAGPAAMSSHIAKSESKTSLLKAAAAAASGGSRAPRHGPARDPGLPSRRLPGSCPATPQSSGDPSSRRPLCRPAPREEGARGSQRVLPQAHCRPREALPAAASRPSPSSPLPPARGRDGEERGLSPALGLRGSLRARGRGDSVPAAASEADPFLHRLRPMLSSAFGQDRSLRPEEIEELREAFREFDKDKDGYINCRDLGNCMRTMGYMPTEMELIELSQQINMNLGGHVDFDDFVELMGPKLLAETADMIGVKELRDAFREFDTNGDGEISTSELREAMRKLLGHQVGHRDIEEIIRDVDLNGDGRVDFEEFVRMMSR</sequence>
<protein>
    <recommendedName>
        <fullName>Calcium-binding protein 1</fullName>
        <shortName>CaBP1</shortName>
    </recommendedName>
    <alternativeName>
        <fullName>Calbrain</fullName>
    </alternativeName>
    <alternativeName>
        <fullName>Caldendrin</fullName>
    </alternativeName>
</protein>
<comment type="function">
    <text evidence="1 2 8 10 13 14 15">Modulates calcium-dependent activity of inositol 1,4,5-triphosphate receptors (ITPRs) (PubMed:14570872). Inhibits agonist-induced intracellular calcium signaling (PubMed:15980432). Enhances inactivation and does not support calcium-dependent facilitation of voltage-dependent P/Q-type calcium channels (PubMed:11865310). Causes calcium-dependent facilitation and inhibits inactivation of L-type calcium channels by binding to the same sites as calmodulin in the C-terminal domain of CACNA1C, but has an opposite effect on channel function (PubMed:15140941). Suppresses the calcium-dependent inactivation of CACNA1D (By similarity). Inhibits TRPC5 channels (PubMed:15895247). Prevents NMDA receptor-induced cellular degeneration. Required for the normal transfer of light signals through the retina (By similarity).</text>
</comment>
<comment type="subunit">
    <text evidence="1 2 8 9 12 13 14 15">Homodimer; when bound to calcium or magnesium. Interacts (via C-terminus) with ITPR1, ITPR2 and ITPR3. This binding is calcium dependent and the interaction correlates with calcium concentration. An additional calcium-independent interaction with the N-terminus of ITPR1 results in a decreased InsP(3) binding to the receptor. Interacts with CACNA1A (via C-terminal CDB motif) in the pre- and postsynaptic membranes. Interacts with CACNA1C (via C-terminal C and IQ motifs). The binding to the C motif is calcium independent whereas the binding to IQ requires the presence of calcium and is mutually exclusive with calmodulin binding. Interacts with CACNA1D (By similarity). Interacts with TRPC5 (via C-terminus). Interacts (via EF-hands 1 and 2) at microtubules with MAP1LC3B. Interacts with MYO1C (By similarity). Interacts (via EF-hands 1 and 2) with NSMF (via the central NLS-containing motif region), the interaction occurs in a calcium dependent manner after synaptic NMDA receptor stimulation and prevents nuclear import of NSMF. Interacts with SPACA9 (By similarity).</text>
</comment>
<comment type="interaction">
    <interactant intactId="EBI-907894">
        <id>Q9NZU7</id>
    </interactant>
    <interactant intactId="EBI-1038838">
        <id>Q13936</id>
        <label>CACNA1C</label>
    </interactant>
    <organismsDiffer>false</organismsDiffer>
    <experiments>4</experiments>
</comment>
<comment type="interaction">
    <interactant intactId="EBI-15896740">
        <id>Q9NZU7-2</id>
    </interactant>
    <interactant intactId="EBI-15896749">
        <id>Q13936-20</id>
        <label>CACNA1C</label>
    </interactant>
    <organismsDiffer>false</organismsDiffer>
    <experiments>2</experiments>
</comment>
<comment type="subcellular location">
    <subcellularLocation>
        <location evidence="7">Cytoplasm</location>
        <location evidence="7">Cytoskeleton</location>
    </subcellularLocation>
    <subcellularLocation>
        <location evidence="11">Cytoplasm</location>
        <location evidence="11">Perinuclear region</location>
    </subcellularLocation>
    <subcellularLocation>
        <location evidence="7 10 11">Cell membrane</location>
        <topology>Lipid-anchor</topology>
        <orientation>Cytoplasmic side</orientation>
    </subcellularLocation>
    <subcellularLocation>
        <location evidence="10 11">Golgi apparatus</location>
    </subcellularLocation>
    <subcellularLocation>
        <location evidence="19">Postsynaptic density</location>
    </subcellularLocation>
    <text evidence="7">L-CaBP1 is associated most likely with the cytoskeletal structures, whereas S-CaBP1 is localized at or near the plasma membrane.</text>
</comment>
<comment type="subcellular location">
    <molecule>Isoform L-CaBP1</molecule>
    <subcellularLocation>
        <location evidence="7">Cytoplasm</location>
        <location evidence="7">Cytoskeleton</location>
    </subcellularLocation>
    <text evidence="7">L-CaBP1 is associated most likely with the cytoskeletal structures.</text>
</comment>
<comment type="subcellular location">
    <molecule>Isoform S-CaBP1</molecule>
    <subcellularLocation>
        <location>Cytoplasm</location>
        <location>Cell cortex</location>
    </subcellularLocation>
    <subcellularLocation>
        <location evidence="20">Cell membrane</location>
        <topology evidence="19">Lipid-anchor</topology>
    </subcellularLocation>
    <text>S-CaBP1 is localized at or near the plasma membrane.</text>
</comment>
<comment type="alternative products">
    <event type="alternative splicing"/>
    <isoform>
        <id>Q9NZU7-4</id>
        <name>Caldendrin</name>
        <sequence type="displayed"/>
    </isoform>
    <isoform>
        <id>Q9NZU7-1</id>
        <name>L-CaBP1</name>
        <name>Caldendrin-S2</name>
        <sequence type="described" ref="VSP_037938 VSP_037939"/>
    </isoform>
    <isoform>
        <id>Q9NZU7-2</id>
        <name>S-CaBP1</name>
        <name>Caldendrin-S1</name>
        <sequence type="described" ref="VSP_037937 VSP_037940"/>
    </isoform>
    <isoform>
        <id>Q9NZU7-3</id>
        <name>Calbrain</name>
        <sequence type="described" ref="VSP_037936"/>
    </isoform>
    <text>Experimental confirmation may be lacking for some isoforms.</text>
</comment>
<comment type="tissue specificity">
    <text>Retina and brain. Somatodendritic compartment of neurons. Calbrain was found exclusively in brain where it is abundant in the hippocampus, habenular area in the epithalamus and in the cerebellum.</text>
</comment>
<comment type="domain">
    <text>EF-1 binds magnesium constitutively under physiological conditions, EF-3 and EF-4 bind calcium cooperatively and EF-2 binds neither calcium nor magnesium.</text>
</comment>
<comment type="PTM">
    <text evidence="11">Phosphorylated. The phosphorylation regulates the activity.</text>
</comment>
<comment type="miscellaneous">
    <molecule>Isoform Calbrain</molecule>
    <text evidence="19">It is currently uncertain whether calbrain represent a spliced isoform.</text>
</comment>
<comment type="caution">
    <text evidence="19">The interaction with CACNA1A is described as calcium independent in PubMed:11865310 while it is shown to be acutely calcium dependent in PubMed:14570872. PubMed:12032348 describes a stimulatory effect of CABP1 during agonist-induced intracellular calcium signaling while PubMed:14570872 and PubMed:11865310 show an inhibitory effect.</text>
</comment>
<proteinExistence type="evidence at protein level"/>
<dbReference type="EMBL" id="X94700">
    <property type="protein sequence ID" value="CAA64361.1"/>
    <property type="molecule type" value="mRNA"/>
</dbReference>
<dbReference type="EMBL" id="AF169148">
    <property type="protein sequence ID" value="AAF25782.1"/>
    <property type="molecule type" value="mRNA"/>
</dbReference>
<dbReference type="EMBL" id="AF169149">
    <property type="protein sequence ID" value="AAF25783.1"/>
    <property type="molecule type" value="mRNA"/>
</dbReference>
<dbReference type="EMBL" id="AC069234">
    <property type="status" value="NOT_ANNOTATED_CDS"/>
    <property type="molecule type" value="Genomic_DNA"/>
</dbReference>
<dbReference type="EMBL" id="BC030201">
    <property type="protein sequence ID" value="AAH30201.2"/>
    <property type="molecule type" value="mRNA"/>
</dbReference>
<dbReference type="CCDS" id="CCDS31913.1">
    <molecule id="Q9NZU7-4"/>
</dbReference>
<dbReference type="CCDS" id="CCDS9204.1">
    <molecule id="Q9NZU7-2"/>
</dbReference>
<dbReference type="CCDS" id="CCDS9205.1">
    <molecule id="Q9NZU7-1"/>
</dbReference>
<dbReference type="RefSeq" id="NP_001028849.1">
    <molecule id="Q9NZU7-4"/>
    <property type="nucleotide sequence ID" value="NM_001033677.2"/>
</dbReference>
<dbReference type="RefSeq" id="NP_004267.2">
    <molecule id="Q9NZU7-2"/>
    <property type="nucleotide sequence ID" value="NM_004276.4"/>
</dbReference>
<dbReference type="RefSeq" id="NP_112482.1">
    <molecule id="Q9NZU7-1"/>
    <property type="nucleotide sequence ID" value="NM_031205.4"/>
</dbReference>
<dbReference type="PDB" id="2K7B">
    <property type="method" value="NMR"/>
    <property type="chains" value="A=219-294"/>
</dbReference>
<dbReference type="PDB" id="2K7C">
    <property type="method" value="NMR"/>
    <property type="chains" value="A=299-370"/>
</dbReference>
<dbReference type="PDB" id="2K7D">
    <property type="method" value="NMR"/>
    <property type="chains" value="A=299-370"/>
</dbReference>
<dbReference type="PDB" id="2LAN">
    <property type="method" value="NMR"/>
    <property type="chains" value="A=219-370"/>
</dbReference>
<dbReference type="PDB" id="2LAP">
    <property type="method" value="NMR"/>
    <property type="chains" value="A=219-370"/>
</dbReference>
<dbReference type="PDB" id="3OX5">
    <property type="method" value="X-ray"/>
    <property type="resolution" value="2.90 A"/>
    <property type="chains" value="A/B/C/D/E/F=219-370"/>
</dbReference>
<dbReference type="PDB" id="3OX6">
    <property type="method" value="X-ray"/>
    <property type="resolution" value="2.40 A"/>
    <property type="chains" value="A/B/C/D/E/F=219-370"/>
</dbReference>
<dbReference type="PDBsum" id="2K7B"/>
<dbReference type="PDBsum" id="2K7C"/>
<dbReference type="PDBsum" id="2K7D"/>
<dbReference type="PDBsum" id="2LAN"/>
<dbReference type="PDBsum" id="2LAP"/>
<dbReference type="PDBsum" id="3OX5"/>
<dbReference type="PDBsum" id="3OX6"/>
<dbReference type="BMRB" id="Q9NZU7"/>
<dbReference type="SMR" id="Q9NZU7"/>
<dbReference type="BioGRID" id="114863">
    <property type="interactions" value="12"/>
</dbReference>
<dbReference type="DIP" id="DIP-35477N"/>
<dbReference type="FunCoup" id="Q9NZU7">
    <property type="interactions" value="3"/>
</dbReference>
<dbReference type="IntAct" id="Q9NZU7">
    <property type="interactions" value="6"/>
</dbReference>
<dbReference type="STRING" id="9606.ENSP00000317310"/>
<dbReference type="TCDB" id="8.A.82.1.11">
    <property type="family name" value="the calmodulin calcium binding protein (calmodulin) family"/>
</dbReference>
<dbReference type="iPTMnet" id="Q9NZU7"/>
<dbReference type="PhosphoSitePlus" id="Q9NZU7"/>
<dbReference type="BioMuta" id="CABP1"/>
<dbReference type="DMDM" id="334302962"/>
<dbReference type="jPOST" id="Q9NZU7"/>
<dbReference type="MassIVE" id="Q9NZU7"/>
<dbReference type="PaxDb" id="9606-ENSP00000317310"/>
<dbReference type="PeptideAtlas" id="Q9NZU7"/>
<dbReference type="ProteomicsDB" id="83512">
    <molecule id="Q9NZU7-4"/>
</dbReference>
<dbReference type="ProteomicsDB" id="83513">
    <molecule id="Q9NZU7-1"/>
</dbReference>
<dbReference type="ProteomicsDB" id="83514">
    <molecule id="Q9NZU7-2"/>
</dbReference>
<dbReference type="ProteomicsDB" id="83515">
    <molecule id="Q9NZU7-3"/>
</dbReference>
<dbReference type="Antibodypedia" id="31502">
    <property type="antibodies" value="126 antibodies from 29 providers"/>
</dbReference>
<dbReference type="DNASU" id="9478"/>
<dbReference type="Ensembl" id="ENST00000288616.7">
    <molecule id="Q9NZU7-1"/>
    <property type="protein sequence ID" value="ENSP00000288616.3"/>
    <property type="gene ID" value="ENSG00000157782.10"/>
</dbReference>
<dbReference type="Ensembl" id="ENST00000316803.8">
    <molecule id="Q9NZU7-4"/>
    <property type="protein sequence ID" value="ENSP00000317310.3"/>
    <property type="gene ID" value="ENSG00000157782.10"/>
</dbReference>
<dbReference type="Ensembl" id="ENST00000351200.6">
    <molecule id="Q9NZU7-2"/>
    <property type="protein sequence ID" value="ENSP00000288615.2"/>
    <property type="gene ID" value="ENSG00000157782.10"/>
</dbReference>
<dbReference type="GeneID" id="9478"/>
<dbReference type="KEGG" id="hsa:9478"/>
<dbReference type="MANE-Select" id="ENST00000316803.8">
    <property type="protein sequence ID" value="ENSP00000317310.3"/>
    <property type="RefSeq nucleotide sequence ID" value="NM_001033677.2"/>
    <property type="RefSeq protein sequence ID" value="NP_001028849.1"/>
</dbReference>
<dbReference type="UCSC" id="uc001tyu.4">
    <molecule id="Q9NZU7-4"/>
    <property type="organism name" value="human"/>
</dbReference>
<dbReference type="AGR" id="HGNC:1384"/>
<dbReference type="CTD" id="9478"/>
<dbReference type="DisGeNET" id="9478"/>
<dbReference type="GeneCards" id="CABP1"/>
<dbReference type="HGNC" id="HGNC:1384">
    <property type="gene designation" value="CABP1"/>
</dbReference>
<dbReference type="HPA" id="ENSG00000157782">
    <property type="expression patterns" value="Tissue enriched (brain)"/>
</dbReference>
<dbReference type="MIM" id="605563">
    <property type="type" value="gene"/>
</dbReference>
<dbReference type="neXtProt" id="NX_Q9NZU7"/>
<dbReference type="OpenTargets" id="ENSG00000157782"/>
<dbReference type="PharmGKB" id="PA26000"/>
<dbReference type="VEuPathDB" id="HostDB:ENSG00000157782"/>
<dbReference type="eggNOG" id="KOG0027">
    <property type="taxonomic scope" value="Eukaryota"/>
</dbReference>
<dbReference type="GeneTree" id="ENSGT00940000158555"/>
<dbReference type="HOGENOM" id="CLU_061288_8_0_1"/>
<dbReference type="InParanoid" id="Q9NZU7"/>
<dbReference type="OMA" id="AHNCALM"/>
<dbReference type="OrthoDB" id="26525at2759"/>
<dbReference type="PAN-GO" id="Q9NZU7">
    <property type="GO annotations" value="4 GO annotations based on evolutionary models"/>
</dbReference>
<dbReference type="PhylomeDB" id="Q9NZU7"/>
<dbReference type="TreeFam" id="TF334804"/>
<dbReference type="PathwayCommons" id="Q9NZU7"/>
<dbReference type="Reactome" id="R-HSA-9662360">
    <property type="pathway name" value="Sensory processing of sound by inner hair cells of the cochlea"/>
</dbReference>
<dbReference type="SignaLink" id="Q9NZU7"/>
<dbReference type="BioGRID-ORCS" id="9478">
    <property type="hits" value="12 hits in 1156 CRISPR screens"/>
</dbReference>
<dbReference type="ChiTaRS" id="CABP1">
    <property type="organism name" value="human"/>
</dbReference>
<dbReference type="EvolutionaryTrace" id="Q9NZU7"/>
<dbReference type="GenomeRNAi" id="9478"/>
<dbReference type="Pharos" id="Q9NZU7">
    <property type="development level" value="Tbio"/>
</dbReference>
<dbReference type="PRO" id="PR:Q9NZU7"/>
<dbReference type="Proteomes" id="UP000005640">
    <property type="component" value="Chromosome 12"/>
</dbReference>
<dbReference type="RNAct" id="Q9NZU7">
    <property type="molecule type" value="protein"/>
</dbReference>
<dbReference type="Bgee" id="ENSG00000157782">
    <property type="expression patterns" value="Expressed in right frontal lobe and 134 other cell types or tissues"/>
</dbReference>
<dbReference type="ExpressionAtlas" id="Q9NZU7">
    <property type="expression patterns" value="baseline and differential"/>
</dbReference>
<dbReference type="GO" id="GO:0005938">
    <property type="term" value="C:cell cortex"/>
    <property type="evidence" value="ECO:0007669"/>
    <property type="project" value="UniProtKB-SubCell"/>
</dbReference>
<dbReference type="GO" id="GO:0005737">
    <property type="term" value="C:cytoplasm"/>
    <property type="evidence" value="ECO:0000318"/>
    <property type="project" value="GO_Central"/>
</dbReference>
<dbReference type="GO" id="GO:0005856">
    <property type="term" value="C:cytoskeleton"/>
    <property type="evidence" value="ECO:0007669"/>
    <property type="project" value="UniProtKB-SubCell"/>
</dbReference>
<dbReference type="GO" id="GO:0005615">
    <property type="term" value="C:extracellular space"/>
    <property type="evidence" value="ECO:0007005"/>
    <property type="project" value="UniProtKB"/>
</dbReference>
<dbReference type="GO" id="GO:0000139">
    <property type="term" value="C:Golgi membrane"/>
    <property type="evidence" value="ECO:0000314"/>
    <property type="project" value="MGI"/>
</dbReference>
<dbReference type="GO" id="GO:0048471">
    <property type="term" value="C:perinuclear region of cytoplasm"/>
    <property type="evidence" value="ECO:0007669"/>
    <property type="project" value="UniProtKB-SubCell"/>
</dbReference>
<dbReference type="GO" id="GO:0005886">
    <property type="term" value="C:plasma membrane"/>
    <property type="evidence" value="ECO:0000314"/>
    <property type="project" value="MGI"/>
</dbReference>
<dbReference type="GO" id="GO:0014069">
    <property type="term" value="C:postsynaptic density"/>
    <property type="evidence" value="ECO:0000314"/>
    <property type="project" value="UniProtKB"/>
</dbReference>
<dbReference type="GO" id="GO:0005246">
    <property type="term" value="F:calcium channel regulator activity"/>
    <property type="evidence" value="ECO:0000318"/>
    <property type="project" value="GO_Central"/>
</dbReference>
<dbReference type="GO" id="GO:0005509">
    <property type="term" value="F:calcium ion binding"/>
    <property type="evidence" value="ECO:0000304"/>
    <property type="project" value="ProtInc"/>
</dbReference>
<dbReference type="GO" id="GO:0048306">
    <property type="term" value="F:calcium-dependent protein binding"/>
    <property type="evidence" value="ECO:0000353"/>
    <property type="project" value="UniProtKB"/>
</dbReference>
<dbReference type="GO" id="GO:0004857">
    <property type="term" value="F:enzyme inhibitor activity"/>
    <property type="evidence" value="ECO:0000304"/>
    <property type="project" value="ProtInc"/>
</dbReference>
<dbReference type="GO" id="GO:0008139">
    <property type="term" value="F:nuclear localization sequence binding"/>
    <property type="evidence" value="ECO:0000250"/>
    <property type="project" value="UniProtKB"/>
</dbReference>
<dbReference type="GO" id="GO:0042308">
    <property type="term" value="P:negative regulation of protein import into nucleus"/>
    <property type="evidence" value="ECO:0000250"/>
    <property type="project" value="UniProtKB"/>
</dbReference>
<dbReference type="GO" id="GO:0007601">
    <property type="term" value="P:visual perception"/>
    <property type="evidence" value="ECO:0000250"/>
    <property type="project" value="UniProtKB"/>
</dbReference>
<dbReference type="CDD" id="cd00051">
    <property type="entry name" value="EFh"/>
    <property type="match status" value="1"/>
</dbReference>
<dbReference type="FunFam" id="1.10.238.10:FF:000069">
    <property type="entry name" value="calcium-binding protein 1 isoform X1"/>
    <property type="match status" value="1"/>
</dbReference>
<dbReference type="FunFam" id="1.10.238.10:FF:000037">
    <property type="entry name" value="calcium-binding protein 1 isoform X2"/>
    <property type="match status" value="1"/>
</dbReference>
<dbReference type="Gene3D" id="1.10.238.10">
    <property type="entry name" value="EF-hand"/>
    <property type="match status" value="2"/>
</dbReference>
<dbReference type="InterPro" id="IPR043582">
    <property type="entry name" value="CaBP1/2/4/5"/>
</dbReference>
<dbReference type="InterPro" id="IPR011992">
    <property type="entry name" value="EF-hand-dom_pair"/>
</dbReference>
<dbReference type="InterPro" id="IPR018247">
    <property type="entry name" value="EF_Hand_1_Ca_BS"/>
</dbReference>
<dbReference type="InterPro" id="IPR002048">
    <property type="entry name" value="EF_hand_dom"/>
</dbReference>
<dbReference type="PANTHER" id="PTHR45917:SF1">
    <property type="entry name" value="CALCIUM-BINDING PROTEIN 1"/>
    <property type="match status" value="1"/>
</dbReference>
<dbReference type="PANTHER" id="PTHR45917">
    <property type="entry name" value="CALCIUM-BINDING PROTEIN 1-RELATED"/>
    <property type="match status" value="1"/>
</dbReference>
<dbReference type="Pfam" id="PF13499">
    <property type="entry name" value="EF-hand_7"/>
    <property type="match status" value="2"/>
</dbReference>
<dbReference type="SMART" id="SM00054">
    <property type="entry name" value="EFh"/>
    <property type="match status" value="3"/>
</dbReference>
<dbReference type="SUPFAM" id="SSF47473">
    <property type="entry name" value="EF-hand"/>
    <property type="match status" value="1"/>
</dbReference>
<dbReference type="PROSITE" id="PS00018">
    <property type="entry name" value="EF_HAND_1"/>
    <property type="match status" value="3"/>
</dbReference>
<dbReference type="PROSITE" id="PS50222">
    <property type="entry name" value="EF_HAND_2"/>
    <property type="match status" value="4"/>
</dbReference>
<organism>
    <name type="scientific">Homo sapiens</name>
    <name type="common">Human</name>
    <dbReference type="NCBI Taxonomy" id="9606"/>
    <lineage>
        <taxon>Eukaryota</taxon>
        <taxon>Metazoa</taxon>
        <taxon>Chordata</taxon>
        <taxon>Craniata</taxon>
        <taxon>Vertebrata</taxon>
        <taxon>Euteleostomi</taxon>
        <taxon>Mammalia</taxon>
        <taxon>Eutheria</taxon>
        <taxon>Euarchontoglires</taxon>
        <taxon>Primates</taxon>
        <taxon>Haplorrhini</taxon>
        <taxon>Catarrhini</taxon>
        <taxon>Hominidae</taxon>
        <taxon>Homo</taxon>
    </lineage>
</organism>
<evidence type="ECO:0000250" key="1">
    <source>
        <dbReference type="UniProtKB" id="O88751"/>
    </source>
</evidence>
<evidence type="ECO:0000250" key="2">
    <source>
        <dbReference type="UniProtKB" id="Q9JLK7"/>
    </source>
</evidence>
<evidence type="ECO:0000255" key="3"/>
<evidence type="ECO:0000255" key="4">
    <source>
        <dbReference type="PROSITE-ProRule" id="PRU00448"/>
    </source>
</evidence>
<evidence type="ECO:0000255" key="5">
    <source>
        <dbReference type="PROSITE-ProRule" id="PRU10142"/>
    </source>
</evidence>
<evidence type="ECO:0000256" key="6">
    <source>
        <dbReference type="SAM" id="MobiDB-lite"/>
    </source>
</evidence>
<evidence type="ECO:0000269" key="7">
    <source>
    </source>
</evidence>
<evidence type="ECO:0000269" key="8">
    <source>
    </source>
</evidence>
<evidence type="ECO:0000269" key="9">
    <source>
    </source>
</evidence>
<evidence type="ECO:0000269" key="10">
    <source>
    </source>
</evidence>
<evidence type="ECO:0000269" key="11">
    <source>
    </source>
</evidence>
<evidence type="ECO:0000269" key="12">
    <source>
    </source>
</evidence>
<evidence type="ECO:0000269" key="13">
    <source>
    </source>
</evidence>
<evidence type="ECO:0000269" key="14">
    <source>
    </source>
</evidence>
<evidence type="ECO:0000269" key="15">
    <source>
    </source>
</evidence>
<evidence type="ECO:0000269" key="16">
    <source>
    </source>
</evidence>
<evidence type="ECO:0000303" key="17">
    <source>
    </source>
</evidence>
<evidence type="ECO:0000303" key="18">
    <source>
    </source>
</evidence>
<evidence type="ECO:0000305" key="19"/>
<evidence type="ECO:0000305" key="20">
    <source>
    </source>
</evidence>
<evidence type="ECO:0007829" key="21">
    <source>
        <dbReference type="PDB" id="2K7B"/>
    </source>
</evidence>
<evidence type="ECO:0007829" key="22">
    <source>
        <dbReference type="PDB" id="2K7C"/>
    </source>
</evidence>
<evidence type="ECO:0007829" key="23">
    <source>
        <dbReference type="PDB" id="3OX6"/>
    </source>
</evidence>
<keyword id="KW-0002">3D-structure</keyword>
<keyword id="KW-0025">Alternative splicing</keyword>
<keyword id="KW-0106">Calcium</keyword>
<keyword id="KW-1003">Cell membrane</keyword>
<keyword id="KW-0963">Cytoplasm</keyword>
<keyword id="KW-0206">Cytoskeleton</keyword>
<keyword id="KW-0333">Golgi apparatus</keyword>
<keyword id="KW-0449">Lipoprotein</keyword>
<keyword id="KW-0460">Magnesium</keyword>
<keyword id="KW-0472">Membrane</keyword>
<keyword id="KW-0479">Metal-binding</keyword>
<keyword id="KW-0519">Myristate</keyword>
<keyword id="KW-0597">Phosphoprotein</keyword>
<keyword id="KW-1267">Proteomics identification</keyword>
<keyword id="KW-1185">Reference proteome</keyword>
<keyword id="KW-0677">Repeat</keyword>
<keyword id="KW-0716">Sensory transduction</keyword>
<keyword id="KW-0770">Synapse</keyword>
<keyword id="KW-0844">Vision</keyword>
<gene>
    <name type="primary">CABP1</name>
</gene>